<proteinExistence type="inferred from homology"/>
<comment type="function">
    <text evidence="1">This protein is involved in the repair of mismatches in DNA. It is possible that it carries out the mismatch recognition step. This protein has a weak ATPase activity.</text>
</comment>
<comment type="similarity">
    <text evidence="1">Belongs to the DNA mismatch repair MutS family.</text>
</comment>
<accession>B2S2S5</accession>
<dbReference type="EMBL" id="CP000805">
    <property type="protein sequence ID" value="ACD70754.1"/>
    <property type="molecule type" value="Genomic_DNA"/>
</dbReference>
<dbReference type="RefSeq" id="WP_010881776.1">
    <property type="nucleotide sequence ID" value="NC_021508.1"/>
</dbReference>
<dbReference type="SMR" id="B2S2S5"/>
<dbReference type="GeneID" id="93876108"/>
<dbReference type="KEGG" id="tpp:TPASS_0328"/>
<dbReference type="PATRIC" id="fig|455434.6.peg.328"/>
<dbReference type="Proteomes" id="UP000001202">
    <property type="component" value="Chromosome"/>
</dbReference>
<dbReference type="GO" id="GO:0005829">
    <property type="term" value="C:cytosol"/>
    <property type="evidence" value="ECO:0007669"/>
    <property type="project" value="TreeGrafter"/>
</dbReference>
<dbReference type="GO" id="GO:0005524">
    <property type="term" value="F:ATP binding"/>
    <property type="evidence" value="ECO:0007669"/>
    <property type="project" value="UniProtKB-UniRule"/>
</dbReference>
<dbReference type="GO" id="GO:0140664">
    <property type="term" value="F:ATP-dependent DNA damage sensor activity"/>
    <property type="evidence" value="ECO:0007669"/>
    <property type="project" value="InterPro"/>
</dbReference>
<dbReference type="GO" id="GO:0003684">
    <property type="term" value="F:damaged DNA binding"/>
    <property type="evidence" value="ECO:0007669"/>
    <property type="project" value="UniProtKB-UniRule"/>
</dbReference>
<dbReference type="GO" id="GO:0030983">
    <property type="term" value="F:mismatched DNA binding"/>
    <property type="evidence" value="ECO:0007669"/>
    <property type="project" value="InterPro"/>
</dbReference>
<dbReference type="GO" id="GO:0006298">
    <property type="term" value="P:mismatch repair"/>
    <property type="evidence" value="ECO:0007669"/>
    <property type="project" value="UniProtKB-UniRule"/>
</dbReference>
<dbReference type="Gene3D" id="1.10.1420.10">
    <property type="match status" value="2"/>
</dbReference>
<dbReference type="Gene3D" id="3.40.1170.10">
    <property type="entry name" value="DNA repair protein MutS, domain I"/>
    <property type="match status" value="1"/>
</dbReference>
<dbReference type="Gene3D" id="3.30.420.110">
    <property type="entry name" value="MutS, connector domain"/>
    <property type="match status" value="1"/>
</dbReference>
<dbReference type="Gene3D" id="3.40.50.300">
    <property type="entry name" value="P-loop containing nucleotide triphosphate hydrolases"/>
    <property type="match status" value="1"/>
</dbReference>
<dbReference type="HAMAP" id="MF_00096">
    <property type="entry name" value="MutS"/>
    <property type="match status" value="1"/>
</dbReference>
<dbReference type="InterPro" id="IPR005748">
    <property type="entry name" value="DNA_mismatch_repair_MutS"/>
</dbReference>
<dbReference type="InterPro" id="IPR007695">
    <property type="entry name" value="DNA_mismatch_repair_MutS-lik_N"/>
</dbReference>
<dbReference type="InterPro" id="IPR017261">
    <property type="entry name" value="DNA_mismatch_repair_MutS/MSH"/>
</dbReference>
<dbReference type="InterPro" id="IPR000432">
    <property type="entry name" value="DNA_mismatch_repair_MutS_C"/>
</dbReference>
<dbReference type="InterPro" id="IPR007861">
    <property type="entry name" value="DNA_mismatch_repair_MutS_clamp"/>
</dbReference>
<dbReference type="InterPro" id="IPR007696">
    <property type="entry name" value="DNA_mismatch_repair_MutS_core"/>
</dbReference>
<dbReference type="InterPro" id="IPR016151">
    <property type="entry name" value="DNA_mismatch_repair_MutS_N"/>
</dbReference>
<dbReference type="InterPro" id="IPR036187">
    <property type="entry name" value="DNA_mismatch_repair_MutS_sf"/>
</dbReference>
<dbReference type="InterPro" id="IPR007860">
    <property type="entry name" value="DNA_mmatch_repair_MutS_con_dom"/>
</dbReference>
<dbReference type="InterPro" id="IPR045076">
    <property type="entry name" value="MutS"/>
</dbReference>
<dbReference type="InterPro" id="IPR036678">
    <property type="entry name" value="MutS_con_dom_sf"/>
</dbReference>
<dbReference type="InterPro" id="IPR027417">
    <property type="entry name" value="P-loop_NTPase"/>
</dbReference>
<dbReference type="NCBIfam" id="TIGR01070">
    <property type="entry name" value="mutS1"/>
    <property type="match status" value="1"/>
</dbReference>
<dbReference type="NCBIfam" id="NF003810">
    <property type="entry name" value="PRK05399.1"/>
    <property type="match status" value="1"/>
</dbReference>
<dbReference type="PANTHER" id="PTHR11361:SF34">
    <property type="entry name" value="DNA MISMATCH REPAIR PROTEIN MSH1, MITOCHONDRIAL"/>
    <property type="match status" value="1"/>
</dbReference>
<dbReference type="PANTHER" id="PTHR11361">
    <property type="entry name" value="DNA MISMATCH REPAIR PROTEIN MUTS FAMILY MEMBER"/>
    <property type="match status" value="1"/>
</dbReference>
<dbReference type="Pfam" id="PF01624">
    <property type="entry name" value="MutS_I"/>
    <property type="match status" value="1"/>
</dbReference>
<dbReference type="Pfam" id="PF05188">
    <property type="entry name" value="MutS_II"/>
    <property type="match status" value="1"/>
</dbReference>
<dbReference type="Pfam" id="PF05192">
    <property type="entry name" value="MutS_III"/>
    <property type="match status" value="1"/>
</dbReference>
<dbReference type="Pfam" id="PF05190">
    <property type="entry name" value="MutS_IV"/>
    <property type="match status" value="1"/>
</dbReference>
<dbReference type="Pfam" id="PF00488">
    <property type="entry name" value="MutS_V"/>
    <property type="match status" value="1"/>
</dbReference>
<dbReference type="PIRSF" id="PIRSF037677">
    <property type="entry name" value="DNA_mis_repair_Msh6"/>
    <property type="match status" value="1"/>
</dbReference>
<dbReference type="SMART" id="SM00534">
    <property type="entry name" value="MUTSac"/>
    <property type="match status" value="1"/>
</dbReference>
<dbReference type="SMART" id="SM00533">
    <property type="entry name" value="MUTSd"/>
    <property type="match status" value="1"/>
</dbReference>
<dbReference type="SUPFAM" id="SSF55271">
    <property type="entry name" value="DNA repair protein MutS, domain I"/>
    <property type="match status" value="1"/>
</dbReference>
<dbReference type="SUPFAM" id="SSF53150">
    <property type="entry name" value="DNA repair protein MutS, domain II"/>
    <property type="match status" value="1"/>
</dbReference>
<dbReference type="SUPFAM" id="SSF48334">
    <property type="entry name" value="DNA repair protein MutS, domain III"/>
    <property type="match status" value="1"/>
</dbReference>
<dbReference type="SUPFAM" id="SSF52540">
    <property type="entry name" value="P-loop containing nucleoside triphosphate hydrolases"/>
    <property type="match status" value="1"/>
</dbReference>
<dbReference type="PROSITE" id="PS00486">
    <property type="entry name" value="DNA_MISMATCH_REPAIR_2"/>
    <property type="match status" value="1"/>
</dbReference>
<evidence type="ECO:0000255" key="1">
    <source>
        <dbReference type="HAMAP-Rule" id="MF_00096"/>
    </source>
</evidence>
<sequence>MRSLASDTPLMRQYHAIRAQHPDAVLFFRLGDFYEMFDSDALHVSTLLGLTLTKRNGTPMCGVPVHTARTHIARLLKHGKKVALCEQVSHPVPGELTQRKVIEIISPGTAVEDDFLSQGFSQYLATVCASDATVAFSYLEVSTGAFFITSFPRAEAADALQKEFGRVQPSEVLLSASVLRSLPELAAILSLYPRLVRTTGADALFNPEHTKNRLHHCFRTRNLDCLTLLPHSPDLAAAGALIAYLEETTRHPLSHVSAITRYHIHDFVEIDDATRKNLEILQNLHDSTHAHSLFETLNYTHTAMGTRLLRYWLHHPLRSQEEIQKRLSAVVFFHHRPHILKTLRATLSCVRDVERLVARVALEKAHGRDLLALKESLRAILTFRSLERESPFPPDLLPSEGDTPVLQELYGLLEQSIKEDCPVTLSDGNLIKRGFSASLDELHRVRDNANEILKQYLAEERERTGIGTLKMKYNRMLGHFLEVSKGHLSAVPAHFIRRRSLSNADRFTTEQLSELEAKLARAREGLVSFEQELFADIRRTVCSHTQLLRTNAARVAQLDVLQSFAHAALQHGWSQPVFIKDGALRITGGRHPVVELHLPSGEFVPNDLTLSSSEHAVLPRFALITGPNMAGKSTFLRQTALICLIAQVGSFVPAEKAELTPVDRIFCRVGAADNLARGESTFLVEMSETAHILRAATRDSLVIMDEVGRGTATEDGLSIAQAVSEYLLHHVRAKTLFATHYHELSRLAHPQLEHLKLDVLETDNTIVFLKKVTPGSCGSSYGIYVARLAGLPESVLARACELLKQLQQRAGSAPRASAAHEADAVAQTEAVHAHKAASKPCAQRVSADLFTQEELIGAEIASLNPDAITPLEALTLIARWKRSLRGSATQQSSAMTKRKG</sequence>
<organism>
    <name type="scientific">Treponema pallidum subsp. pallidum (strain SS14)</name>
    <dbReference type="NCBI Taxonomy" id="455434"/>
    <lineage>
        <taxon>Bacteria</taxon>
        <taxon>Pseudomonadati</taxon>
        <taxon>Spirochaetota</taxon>
        <taxon>Spirochaetia</taxon>
        <taxon>Spirochaetales</taxon>
        <taxon>Treponemataceae</taxon>
        <taxon>Treponema</taxon>
    </lineage>
</organism>
<keyword id="KW-0067">ATP-binding</keyword>
<keyword id="KW-0227">DNA damage</keyword>
<keyword id="KW-0234">DNA repair</keyword>
<keyword id="KW-0238">DNA-binding</keyword>
<keyword id="KW-0547">Nucleotide-binding</keyword>
<gene>
    <name evidence="1" type="primary">mutS</name>
    <name type="ordered locus">TPASS_0328</name>
</gene>
<reference key="1">
    <citation type="journal article" date="2008" name="BMC Microbiol.">
        <title>Complete genome sequence of Treponema pallidum ssp. pallidum strain SS14 determined with oligonucleotide arrays.</title>
        <authorList>
            <person name="Matejkova P."/>
            <person name="Strouhal M."/>
            <person name="Smajs D."/>
            <person name="Norris S.J."/>
            <person name="Palzkill T."/>
            <person name="Petrosino J.F."/>
            <person name="Sodergren E."/>
            <person name="Norton J.E."/>
            <person name="Singh J."/>
            <person name="Richmond T.A."/>
            <person name="Molla M.N."/>
            <person name="Albert T.J."/>
            <person name="Weinstock G.M."/>
        </authorList>
    </citation>
    <scope>NUCLEOTIDE SEQUENCE [LARGE SCALE GENOMIC DNA]</scope>
    <source>
        <strain>SS14</strain>
    </source>
</reference>
<feature type="chain" id="PRO_1000093653" description="DNA mismatch repair protein MutS">
    <location>
        <begin position="1"/>
        <end position="900"/>
    </location>
</feature>
<feature type="binding site" evidence="1">
    <location>
        <begin position="626"/>
        <end position="633"/>
    </location>
    <ligand>
        <name>ATP</name>
        <dbReference type="ChEBI" id="CHEBI:30616"/>
    </ligand>
</feature>
<name>MUTS_TREPS</name>
<protein>
    <recommendedName>
        <fullName evidence="1">DNA mismatch repair protein MutS</fullName>
    </recommendedName>
</protein>